<dbReference type="EMBL" id="AABR03082200">
    <property type="status" value="NOT_ANNOTATED_CDS"/>
    <property type="molecule type" value="Genomic_DNA"/>
</dbReference>
<dbReference type="EMBL" id="BC083607">
    <property type="protein sequence ID" value="AAH83607.1"/>
    <property type="molecule type" value="mRNA"/>
</dbReference>
<dbReference type="RefSeq" id="NP_001389150.1">
    <molecule id="Q5XIR6-1"/>
    <property type="nucleotide sequence ID" value="NM_001402221.2"/>
</dbReference>
<dbReference type="RefSeq" id="XP_063127659.1">
    <molecule id="Q5XIR6-1"/>
    <property type="nucleotide sequence ID" value="XM_063271589.1"/>
</dbReference>
<dbReference type="RefSeq" id="XP_063127661.1">
    <molecule id="Q5XIR6-2"/>
    <property type="nucleotide sequence ID" value="XM_063271591.1"/>
</dbReference>
<dbReference type="SMR" id="Q5XIR6"/>
<dbReference type="FunCoup" id="Q5XIR6">
    <property type="interactions" value="3204"/>
</dbReference>
<dbReference type="STRING" id="10116.ENSRNOP00000001860"/>
<dbReference type="PhosphoSitePlus" id="Q5XIR6"/>
<dbReference type="PaxDb" id="10116-ENSRNOP00000001860"/>
<dbReference type="Ensembl" id="ENSRNOT00000112938.1">
    <molecule id="Q5XIR6-2"/>
    <property type="protein sequence ID" value="ENSRNOP00000079683.1"/>
    <property type="gene ID" value="ENSRNOG00000001377.8"/>
</dbReference>
<dbReference type="GeneID" id="498184"/>
<dbReference type="AGR" id="RGD:1560757"/>
<dbReference type="RGD" id="1560757">
    <property type="gene designation" value="Iqcd"/>
</dbReference>
<dbReference type="VEuPathDB" id="HostDB:ENSRNOG00000001377"/>
<dbReference type="eggNOG" id="ENOG502QQS9">
    <property type="taxonomic scope" value="Eukaryota"/>
</dbReference>
<dbReference type="GeneTree" id="ENSGT00550000075100"/>
<dbReference type="HOGENOM" id="CLU_637710_0_0_1"/>
<dbReference type="InParanoid" id="Q5XIR6"/>
<dbReference type="PhylomeDB" id="Q5XIR6"/>
<dbReference type="TreeFam" id="TF326203"/>
<dbReference type="PRO" id="PR:Q5XIR6"/>
<dbReference type="Proteomes" id="UP000002494">
    <property type="component" value="Chromosome 12"/>
</dbReference>
<dbReference type="Bgee" id="ENSRNOG00000001378">
    <property type="expression patterns" value="Expressed in testis and 6 other cell types or tissues"/>
</dbReference>
<dbReference type="GO" id="GO:0036064">
    <property type="term" value="C:ciliary basal body"/>
    <property type="evidence" value="ECO:0000266"/>
    <property type="project" value="RGD"/>
</dbReference>
<dbReference type="GO" id="GO:0005737">
    <property type="term" value="C:cytoplasm"/>
    <property type="evidence" value="ECO:0007669"/>
    <property type="project" value="UniProtKB-KW"/>
</dbReference>
<dbReference type="GO" id="GO:0031514">
    <property type="term" value="C:motile cilium"/>
    <property type="evidence" value="ECO:0007669"/>
    <property type="project" value="UniProtKB-KW"/>
</dbReference>
<dbReference type="CDD" id="cd23767">
    <property type="entry name" value="IQCD"/>
    <property type="match status" value="1"/>
</dbReference>
<dbReference type="Gene3D" id="1.20.5.190">
    <property type="match status" value="1"/>
</dbReference>
<dbReference type="InterPro" id="IPR042815">
    <property type="entry name" value="DRC10"/>
</dbReference>
<dbReference type="InterPro" id="IPR000048">
    <property type="entry name" value="IQ_motif_EF-hand-BS"/>
</dbReference>
<dbReference type="PANTHER" id="PTHR31598:SF1">
    <property type="entry name" value="DYNEIN REGULATORY COMPLEX PROTEIN 10"/>
    <property type="match status" value="1"/>
</dbReference>
<dbReference type="PANTHER" id="PTHR31598">
    <property type="entry name" value="IQ DOMAIN-CONTAINING PROTEIN D"/>
    <property type="match status" value="1"/>
</dbReference>
<dbReference type="Pfam" id="PF00612">
    <property type="entry name" value="IQ"/>
    <property type="match status" value="1"/>
</dbReference>
<dbReference type="SMART" id="SM00015">
    <property type="entry name" value="IQ"/>
    <property type="match status" value="1"/>
</dbReference>
<dbReference type="PROSITE" id="PS50096">
    <property type="entry name" value="IQ"/>
    <property type="match status" value="1"/>
</dbReference>
<evidence type="ECO:0000250" key="1">
    <source>
        <dbReference type="UniProtKB" id="A8J0N6"/>
    </source>
</evidence>
<evidence type="ECO:0000250" key="2">
    <source>
        <dbReference type="UniProtKB" id="F1RKB1"/>
    </source>
</evidence>
<evidence type="ECO:0000255" key="3"/>
<evidence type="ECO:0000255" key="4">
    <source>
        <dbReference type="PROSITE-ProRule" id="PRU00116"/>
    </source>
</evidence>
<evidence type="ECO:0000256" key="5">
    <source>
        <dbReference type="SAM" id="MobiDB-lite"/>
    </source>
</evidence>
<evidence type="ECO:0000303" key="6">
    <source>
    </source>
</evidence>
<evidence type="ECO:0000305" key="7"/>
<accession>Q5XIR6</accession>
<sequence length="457" mass="53256">MALNLLSIPPSYHGLIIQRIPLKTGLVPAEPLKTLAPSKSKLNTIEAKRIMSVLDEAINKVELITLMSYLESHPEALEDALPENFVEAIREHLDIGQALVEKASILQRKQKELEKGEEAEEDWDQERLLSIELHKTNLWPLTHQFRDSTKTILRLLINEPQLTRLLHTQAPGRSPGAQCLLTSLVELRGFLFEKLLTSPMEVREKNQFIQDISRRSKRNQEIIDALQAELAEVLKNKEAEVEKENFVIQELKNHLHQVFKFSENSLLRTKQEAEKQQKVDYRASQARQAKTQQDILALRAQYHNLVMENREAEQALRKKKYKVETEIENWIQKYDMEMNEKQEEYEDLETIHKEEKLQLEELKERHAVLVEEFSQIRAESEINSKKRVEAEREMVRMVRAATLIQAMWKGYLVRSMLRSRKKKRVKSKGKDKGKGKEKPKEEKGKEKKAKGKGKGKK</sequence>
<feature type="chain" id="PRO_0000282551" description="Dynein regulatory complex protein 10">
    <location>
        <begin position="1"/>
        <end position="457"/>
    </location>
</feature>
<feature type="domain" description="IQ" evidence="4">
    <location>
        <begin position="397"/>
        <end position="426"/>
    </location>
</feature>
<feature type="region of interest" description="Disordered" evidence="5">
    <location>
        <begin position="419"/>
        <end position="457"/>
    </location>
</feature>
<feature type="coiled-coil region" evidence="3">
    <location>
        <begin position="101"/>
        <end position="127"/>
    </location>
</feature>
<feature type="coiled-coil region" evidence="3">
    <location>
        <begin position="209"/>
        <end position="258"/>
    </location>
</feature>
<feature type="coiled-coil region" evidence="3">
    <location>
        <begin position="292"/>
        <end position="381"/>
    </location>
</feature>
<feature type="compositionally biased region" description="Basic and acidic residues" evidence="5">
    <location>
        <begin position="428"/>
        <end position="445"/>
    </location>
</feature>
<feature type="compositionally biased region" description="Basic residues" evidence="5">
    <location>
        <begin position="446"/>
        <end position="457"/>
    </location>
</feature>
<feature type="splice variant" id="VSP_024182" description="In isoform 2." evidence="6">
    <original>KKYKVETEIENWIQKY</original>
    <variation>VLSSISSNHMVAHSHP</variation>
    <location>
        <begin position="319"/>
        <end position="334"/>
    </location>
</feature>
<feature type="splice variant" id="VSP_024183" description="In isoform 2." evidence="6">
    <location>
        <begin position="335"/>
        <end position="457"/>
    </location>
</feature>
<name>DRC10_RAT</name>
<protein>
    <recommendedName>
        <fullName evidence="1">Dynein regulatory complex protein 10</fullName>
    </recommendedName>
    <alternativeName>
        <fullName>IQ domain-containing protein D</fullName>
    </alternativeName>
</protein>
<organism>
    <name type="scientific">Rattus norvegicus</name>
    <name type="common">Rat</name>
    <dbReference type="NCBI Taxonomy" id="10116"/>
    <lineage>
        <taxon>Eukaryota</taxon>
        <taxon>Metazoa</taxon>
        <taxon>Chordata</taxon>
        <taxon>Craniata</taxon>
        <taxon>Vertebrata</taxon>
        <taxon>Euteleostomi</taxon>
        <taxon>Mammalia</taxon>
        <taxon>Eutheria</taxon>
        <taxon>Euarchontoglires</taxon>
        <taxon>Glires</taxon>
        <taxon>Rodentia</taxon>
        <taxon>Myomorpha</taxon>
        <taxon>Muroidea</taxon>
        <taxon>Muridae</taxon>
        <taxon>Murinae</taxon>
        <taxon>Rattus</taxon>
    </lineage>
</organism>
<keyword id="KW-0025">Alternative splicing</keyword>
<keyword id="KW-0966">Cell projection</keyword>
<keyword id="KW-0969">Cilium</keyword>
<keyword id="KW-0175">Coiled coil</keyword>
<keyword id="KW-0963">Cytoplasm</keyword>
<keyword id="KW-0206">Cytoskeleton</keyword>
<keyword id="KW-0282">Flagellum</keyword>
<keyword id="KW-1185">Reference proteome</keyword>
<reference key="1">
    <citation type="journal article" date="2004" name="Nature">
        <title>Genome sequence of the Brown Norway rat yields insights into mammalian evolution.</title>
        <authorList>
            <person name="Gibbs R.A."/>
            <person name="Weinstock G.M."/>
            <person name="Metzker M.L."/>
            <person name="Muzny D.M."/>
            <person name="Sodergren E.J."/>
            <person name="Scherer S."/>
            <person name="Scott G."/>
            <person name="Steffen D."/>
            <person name="Worley K.C."/>
            <person name="Burch P.E."/>
            <person name="Okwuonu G."/>
            <person name="Hines S."/>
            <person name="Lewis L."/>
            <person name="Deramo C."/>
            <person name="Delgado O."/>
            <person name="Dugan-Rocha S."/>
            <person name="Miner G."/>
            <person name="Morgan M."/>
            <person name="Hawes A."/>
            <person name="Gill R."/>
            <person name="Holt R.A."/>
            <person name="Adams M.D."/>
            <person name="Amanatides P.G."/>
            <person name="Baden-Tillson H."/>
            <person name="Barnstead M."/>
            <person name="Chin S."/>
            <person name="Evans C.A."/>
            <person name="Ferriera S."/>
            <person name="Fosler C."/>
            <person name="Glodek A."/>
            <person name="Gu Z."/>
            <person name="Jennings D."/>
            <person name="Kraft C.L."/>
            <person name="Nguyen T."/>
            <person name="Pfannkoch C.M."/>
            <person name="Sitter C."/>
            <person name="Sutton G.G."/>
            <person name="Venter J.C."/>
            <person name="Woodage T."/>
            <person name="Smith D."/>
            <person name="Lee H.-M."/>
            <person name="Gustafson E."/>
            <person name="Cahill P."/>
            <person name="Kana A."/>
            <person name="Doucette-Stamm L."/>
            <person name="Weinstock K."/>
            <person name="Fechtel K."/>
            <person name="Weiss R.B."/>
            <person name="Dunn D.M."/>
            <person name="Green E.D."/>
            <person name="Blakesley R.W."/>
            <person name="Bouffard G.G."/>
            <person name="De Jong P.J."/>
            <person name="Osoegawa K."/>
            <person name="Zhu B."/>
            <person name="Marra M."/>
            <person name="Schein J."/>
            <person name="Bosdet I."/>
            <person name="Fjell C."/>
            <person name="Jones S."/>
            <person name="Krzywinski M."/>
            <person name="Mathewson C."/>
            <person name="Siddiqui A."/>
            <person name="Wye N."/>
            <person name="McPherson J."/>
            <person name="Zhao S."/>
            <person name="Fraser C.M."/>
            <person name="Shetty J."/>
            <person name="Shatsman S."/>
            <person name="Geer K."/>
            <person name="Chen Y."/>
            <person name="Abramzon S."/>
            <person name="Nierman W.C."/>
            <person name="Havlak P.H."/>
            <person name="Chen R."/>
            <person name="Durbin K.J."/>
            <person name="Egan A."/>
            <person name="Ren Y."/>
            <person name="Song X.-Z."/>
            <person name="Li B."/>
            <person name="Liu Y."/>
            <person name="Qin X."/>
            <person name="Cawley S."/>
            <person name="Cooney A.J."/>
            <person name="D'Souza L.M."/>
            <person name="Martin K."/>
            <person name="Wu J.Q."/>
            <person name="Gonzalez-Garay M.L."/>
            <person name="Jackson A.R."/>
            <person name="Kalafus K.J."/>
            <person name="McLeod M.P."/>
            <person name="Milosavljevic A."/>
            <person name="Virk D."/>
            <person name="Volkov A."/>
            <person name="Wheeler D.A."/>
            <person name="Zhang Z."/>
            <person name="Bailey J.A."/>
            <person name="Eichler E.E."/>
            <person name="Tuzun E."/>
            <person name="Birney E."/>
            <person name="Mongin E."/>
            <person name="Ureta-Vidal A."/>
            <person name="Woodwark C."/>
            <person name="Zdobnov E."/>
            <person name="Bork P."/>
            <person name="Suyama M."/>
            <person name="Torrents D."/>
            <person name="Alexandersson M."/>
            <person name="Trask B.J."/>
            <person name="Young J.M."/>
            <person name="Huang H."/>
            <person name="Wang H."/>
            <person name="Xing H."/>
            <person name="Daniels S."/>
            <person name="Gietzen D."/>
            <person name="Schmidt J."/>
            <person name="Stevens K."/>
            <person name="Vitt U."/>
            <person name="Wingrove J."/>
            <person name="Camara F."/>
            <person name="Mar Alba M."/>
            <person name="Abril J.F."/>
            <person name="Guigo R."/>
            <person name="Smit A."/>
            <person name="Dubchak I."/>
            <person name="Rubin E.M."/>
            <person name="Couronne O."/>
            <person name="Poliakov A."/>
            <person name="Huebner N."/>
            <person name="Ganten D."/>
            <person name="Goesele C."/>
            <person name="Hummel O."/>
            <person name="Kreitler T."/>
            <person name="Lee Y.-A."/>
            <person name="Monti J."/>
            <person name="Schulz H."/>
            <person name="Zimdahl H."/>
            <person name="Himmelbauer H."/>
            <person name="Lehrach H."/>
            <person name="Jacob H.J."/>
            <person name="Bromberg S."/>
            <person name="Gullings-Handley J."/>
            <person name="Jensen-Seaman M.I."/>
            <person name="Kwitek A.E."/>
            <person name="Lazar J."/>
            <person name="Pasko D."/>
            <person name="Tonellato P.J."/>
            <person name="Twigger S."/>
            <person name="Ponting C.P."/>
            <person name="Duarte J.M."/>
            <person name="Rice S."/>
            <person name="Goodstadt L."/>
            <person name="Beatson S.A."/>
            <person name="Emes R.D."/>
            <person name="Winter E.E."/>
            <person name="Webber C."/>
            <person name="Brandt P."/>
            <person name="Nyakatura G."/>
            <person name="Adetobi M."/>
            <person name="Chiaromonte F."/>
            <person name="Elnitski L."/>
            <person name="Eswara P."/>
            <person name="Hardison R.C."/>
            <person name="Hou M."/>
            <person name="Kolbe D."/>
            <person name="Makova K."/>
            <person name="Miller W."/>
            <person name="Nekrutenko A."/>
            <person name="Riemer C."/>
            <person name="Schwartz S."/>
            <person name="Taylor J."/>
            <person name="Yang S."/>
            <person name="Zhang Y."/>
            <person name="Lindpaintner K."/>
            <person name="Andrews T.D."/>
            <person name="Caccamo M."/>
            <person name="Clamp M."/>
            <person name="Clarke L."/>
            <person name="Curwen V."/>
            <person name="Durbin R.M."/>
            <person name="Eyras E."/>
            <person name="Searle S.M."/>
            <person name="Cooper G.M."/>
            <person name="Batzoglou S."/>
            <person name="Brudno M."/>
            <person name="Sidow A."/>
            <person name="Stone E.A."/>
            <person name="Payseur B.A."/>
            <person name="Bourque G."/>
            <person name="Lopez-Otin C."/>
            <person name="Puente X.S."/>
            <person name="Chakrabarti K."/>
            <person name="Chatterji S."/>
            <person name="Dewey C."/>
            <person name="Pachter L."/>
            <person name="Bray N."/>
            <person name="Yap V.B."/>
            <person name="Caspi A."/>
            <person name="Tesler G."/>
            <person name="Pevzner P.A."/>
            <person name="Haussler D."/>
            <person name="Roskin K.M."/>
            <person name="Baertsch R."/>
            <person name="Clawson H."/>
            <person name="Furey T.S."/>
            <person name="Hinrichs A.S."/>
            <person name="Karolchik D."/>
            <person name="Kent W.J."/>
            <person name="Rosenbloom K.R."/>
            <person name="Trumbower H."/>
            <person name="Weirauch M."/>
            <person name="Cooper D.N."/>
            <person name="Stenson P.D."/>
            <person name="Ma B."/>
            <person name="Brent M."/>
            <person name="Arumugam M."/>
            <person name="Shteynberg D."/>
            <person name="Copley R.R."/>
            <person name="Taylor M.S."/>
            <person name="Riethman H."/>
            <person name="Mudunuri U."/>
            <person name="Peterson J."/>
            <person name="Guyer M."/>
            <person name="Felsenfeld A."/>
            <person name="Old S."/>
            <person name="Mockrin S."/>
            <person name="Collins F.S."/>
        </authorList>
    </citation>
    <scope>NUCLEOTIDE SEQUENCE [LARGE SCALE GENOMIC DNA]</scope>
    <source>
        <strain>Brown Norway</strain>
    </source>
</reference>
<reference key="2">
    <citation type="journal article" date="2004" name="Genome Res.">
        <title>The status, quality, and expansion of the NIH full-length cDNA project: the Mammalian Gene Collection (MGC).</title>
        <authorList>
            <consortium name="The MGC Project Team"/>
        </authorList>
    </citation>
    <scope>NUCLEOTIDE SEQUENCE [LARGE SCALE MRNA] (ISOFORM 2)</scope>
    <source>
        <tissue>Testis</tissue>
    </source>
</reference>
<gene>
    <name type="primary">Iqcd</name>
    <name evidence="1" type="synonym">Drc10</name>
</gene>
<proteinExistence type="evidence at transcript level"/>
<comment type="function">
    <text evidence="1">Component of the nexin-dynein regulatory complex (N-DRC), a key regulator of ciliary/flagellar motility which maintains the alignment and integrity of the distal axoneme and regulates microtubule sliding in motile axonemes.</text>
</comment>
<comment type="subunit">
    <text evidence="1 2">Component of the nexin-dynein regulatory complex (N-DRC). Interacts with CFAP52 (By similarity).</text>
</comment>
<comment type="subcellular location">
    <subcellularLocation>
        <location evidence="1">Cytoplasm</location>
        <location evidence="1">Cytoskeleton</location>
        <location evidence="1">Flagellum axoneme</location>
    </subcellularLocation>
</comment>
<comment type="alternative products">
    <event type="alternative splicing"/>
    <isoform>
        <id>Q5XIR6-1</id>
        <name>1</name>
        <sequence type="displayed"/>
    </isoform>
    <isoform>
        <id>Q5XIR6-2</id>
        <name>2</name>
        <sequence type="described" ref="VSP_024182 VSP_024183"/>
    </isoform>
</comment>
<comment type="similarity">
    <text evidence="7">Belongs to the DRC10 family.</text>
</comment>